<evidence type="ECO:0000255" key="1">
    <source>
        <dbReference type="HAMAP-Rule" id="MF_00593"/>
    </source>
</evidence>
<organism>
    <name type="scientific">Streptococcus pyogenes serotype M18 (strain MGAS8232)</name>
    <dbReference type="NCBI Taxonomy" id="186103"/>
    <lineage>
        <taxon>Bacteria</taxon>
        <taxon>Bacillati</taxon>
        <taxon>Bacillota</taxon>
        <taxon>Bacilli</taxon>
        <taxon>Lactobacillales</taxon>
        <taxon>Streptococcaceae</taxon>
        <taxon>Streptococcus</taxon>
    </lineage>
</organism>
<comment type="function">
    <text evidence="1">Catalyzes the first step in the D-alanylation of lipoteichoic acid (LTA), the activation of D-alanine and its transfer onto the D-alanyl carrier protein (Dcp) DltC. In an ATP-dependent two-step reaction, forms a high energy D-alanyl-AMP intermediate, followed by transfer of the D-alanyl residue as a thiol ester to the phosphopantheinyl prosthetic group of the Dcp. D-alanylation of LTA plays an important role in modulating the properties of the cell wall in Gram-positive bacteria, influencing the net charge of the cell wall.</text>
</comment>
<comment type="catalytic activity">
    <reaction evidence="1">
        <text>holo-[D-alanyl-carrier protein] + D-alanine + ATP = D-alanyl-[D-alanyl-carrier protein] + AMP + diphosphate</text>
        <dbReference type="Rhea" id="RHEA:55132"/>
        <dbReference type="Rhea" id="RHEA-COMP:14102"/>
        <dbReference type="Rhea" id="RHEA-COMP:14103"/>
        <dbReference type="ChEBI" id="CHEBI:30616"/>
        <dbReference type="ChEBI" id="CHEBI:33019"/>
        <dbReference type="ChEBI" id="CHEBI:57416"/>
        <dbReference type="ChEBI" id="CHEBI:64479"/>
        <dbReference type="ChEBI" id="CHEBI:138620"/>
        <dbReference type="ChEBI" id="CHEBI:456215"/>
        <dbReference type="EC" id="6.2.1.54"/>
    </reaction>
</comment>
<comment type="pathway">
    <text evidence="1">Cell wall biogenesis; lipoteichoic acid biosynthesis.</text>
</comment>
<comment type="subcellular location">
    <subcellularLocation>
        <location evidence="1">Cytoplasm</location>
    </subcellularLocation>
</comment>
<comment type="similarity">
    <text evidence="1">Belongs to the ATP-dependent AMP-binding enzyme family. DltA subfamily.</text>
</comment>
<gene>
    <name evidence="1" type="primary">dltA</name>
    <name type="ordered locus">spyM18_1324</name>
</gene>
<dbReference type="EC" id="6.2.1.54" evidence="1"/>
<dbReference type="EMBL" id="AE009949">
    <property type="protein sequence ID" value="AAL97928.1"/>
    <property type="molecule type" value="Genomic_DNA"/>
</dbReference>
<dbReference type="RefSeq" id="WP_002984203.1">
    <property type="nucleotide sequence ID" value="NC_003485.1"/>
</dbReference>
<dbReference type="SMR" id="Q8P0J9"/>
<dbReference type="KEGG" id="spm:spyM18_1324"/>
<dbReference type="HOGENOM" id="CLU_000022_2_12_9"/>
<dbReference type="UniPathway" id="UPA00556"/>
<dbReference type="GO" id="GO:0005737">
    <property type="term" value="C:cytoplasm"/>
    <property type="evidence" value="ECO:0007669"/>
    <property type="project" value="UniProtKB-SubCell"/>
</dbReference>
<dbReference type="GO" id="GO:0005524">
    <property type="term" value="F:ATP binding"/>
    <property type="evidence" value="ECO:0007669"/>
    <property type="project" value="UniProtKB-KW"/>
</dbReference>
<dbReference type="GO" id="GO:0047473">
    <property type="term" value="F:D-alanine [D-alanyl carrier protein] ligase activity"/>
    <property type="evidence" value="ECO:0007669"/>
    <property type="project" value="UniProtKB-UniRule"/>
</dbReference>
<dbReference type="GO" id="GO:0070395">
    <property type="term" value="P:lipoteichoic acid biosynthetic process"/>
    <property type="evidence" value="ECO:0007669"/>
    <property type="project" value="UniProtKB-UniRule"/>
</dbReference>
<dbReference type="CDD" id="cd05945">
    <property type="entry name" value="DltA"/>
    <property type="match status" value="1"/>
</dbReference>
<dbReference type="FunFam" id="3.30.300.30:FF:000012">
    <property type="entry name" value="D-alanine--D-alanyl carrier protein ligase"/>
    <property type="match status" value="1"/>
</dbReference>
<dbReference type="Gene3D" id="3.30.300.30">
    <property type="match status" value="1"/>
</dbReference>
<dbReference type="Gene3D" id="3.40.50.12780">
    <property type="entry name" value="N-terminal domain of ligase-like"/>
    <property type="match status" value="1"/>
</dbReference>
<dbReference type="HAMAP" id="MF_00593">
    <property type="entry name" value="DltA"/>
    <property type="match status" value="1"/>
</dbReference>
<dbReference type="InterPro" id="IPR010071">
    <property type="entry name" value="AA_adenyl_dom"/>
</dbReference>
<dbReference type="InterPro" id="IPR025110">
    <property type="entry name" value="AMP-bd_C"/>
</dbReference>
<dbReference type="InterPro" id="IPR045851">
    <property type="entry name" value="AMP-bd_C_sf"/>
</dbReference>
<dbReference type="InterPro" id="IPR020845">
    <property type="entry name" value="AMP-binding_CS"/>
</dbReference>
<dbReference type="InterPro" id="IPR000873">
    <property type="entry name" value="AMP-dep_synth/lig_dom"/>
</dbReference>
<dbReference type="InterPro" id="IPR042099">
    <property type="entry name" value="ANL_N_sf"/>
</dbReference>
<dbReference type="InterPro" id="IPR010072">
    <property type="entry name" value="DltA"/>
</dbReference>
<dbReference type="InterPro" id="IPR044507">
    <property type="entry name" value="DltA-like"/>
</dbReference>
<dbReference type="NCBIfam" id="TIGR01733">
    <property type="entry name" value="AA-adenyl-dom"/>
    <property type="match status" value="1"/>
</dbReference>
<dbReference type="NCBIfam" id="TIGR01734">
    <property type="entry name" value="D-ala-DACP-lig"/>
    <property type="match status" value="1"/>
</dbReference>
<dbReference type="NCBIfam" id="NF003417">
    <property type="entry name" value="PRK04813.1"/>
    <property type="match status" value="1"/>
</dbReference>
<dbReference type="PANTHER" id="PTHR45398">
    <property type="match status" value="1"/>
</dbReference>
<dbReference type="PANTHER" id="PTHR45398:SF1">
    <property type="entry name" value="ENZYME, PUTATIVE (JCVI)-RELATED"/>
    <property type="match status" value="1"/>
</dbReference>
<dbReference type="Pfam" id="PF00501">
    <property type="entry name" value="AMP-binding"/>
    <property type="match status" value="1"/>
</dbReference>
<dbReference type="Pfam" id="PF13193">
    <property type="entry name" value="AMP-binding_C"/>
    <property type="match status" value="1"/>
</dbReference>
<dbReference type="SUPFAM" id="SSF56801">
    <property type="entry name" value="Acetyl-CoA synthetase-like"/>
    <property type="match status" value="1"/>
</dbReference>
<dbReference type="PROSITE" id="PS00455">
    <property type="entry name" value="AMP_BINDING"/>
    <property type="match status" value="1"/>
</dbReference>
<protein>
    <recommendedName>
        <fullName evidence="1">D-alanine--D-alanyl carrier protein ligase</fullName>
        <shortName evidence="1">DCL</shortName>
        <ecNumber evidence="1">6.2.1.54</ecNumber>
    </recommendedName>
    <alternativeName>
        <fullName evidence="1">D-alanine--poly(phosphoribitol) ligase subunit 1</fullName>
    </alternativeName>
    <alternativeName>
        <fullName evidence="1">D-alanine-activating enzyme</fullName>
        <shortName evidence="1">DAE</shortName>
    </alternativeName>
</protein>
<keyword id="KW-0067">ATP-binding</keyword>
<keyword id="KW-0963">Cytoplasm</keyword>
<keyword id="KW-0436">Ligase</keyword>
<keyword id="KW-0547">Nucleotide-binding</keyword>
<proteinExistence type="inferred from homology"/>
<reference key="1">
    <citation type="journal article" date="2002" name="Proc. Natl. Acad. Sci. U.S.A.">
        <title>Genome sequence and comparative microarray analysis of serotype M18 group A Streptococcus strains associated with acute rheumatic fever outbreaks.</title>
        <authorList>
            <person name="Smoot J.C."/>
            <person name="Barbian K.D."/>
            <person name="Van Gompel J.J."/>
            <person name="Smoot L.M."/>
            <person name="Chaussee M.S."/>
            <person name="Sylva G.L."/>
            <person name="Sturdevant D.E."/>
            <person name="Ricklefs S.M."/>
            <person name="Porcella S.F."/>
            <person name="Parkins L.D."/>
            <person name="Beres S.B."/>
            <person name="Campbell D.S."/>
            <person name="Smith T.M."/>
            <person name="Zhang Q."/>
            <person name="Kapur V."/>
            <person name="Daly J.A."/>
            <person name="Veasy L.G."/>
            <person name="Musser J.M."/>
        </authorList>
    </citation>
    <scope>NUCLEOTIDE SEQUENCE [LARGE SCALE GENOMIC DNA]</scope>
    <source>
        <strain>MGAS8232</strain>
    </source>
</reference>
<feature type="chain" id="PRO_0000213168" description="D-alanine--D-alanyl carrier protein ligase">
    <location>
        <begin position="1"/>
        <end position="512"/>
    </location>
</feature>
<feature type="binding site" evidence="1">
    <location>
        <begin position="152"/>
        <end position="153"/>
    </location>
    <ligand>
        <name>ATP</name>
        <dbReference type="ChEBI" id="CHEBI:30616"/>
    </ligand>
</feature>
<feature type="binding site" evidence="1">
    <location>
        <position position="199"/>
    </location>
    <ligand>
        <name>D-alanine</name>
        <dbReference type="ChEBI" id="CHEBI:57416"/>
    </ligand>
</feature>
<feature type="binding site" evidence="1">
    <location>
        <begin position="294"/>
        <end position="299"/>
    </location>
    <ligand>
        <name>ATP</name>
        <dbReference type="ChEBI" id="CHEBI:30616"/>
    </ligand>
</feature>
<feature type="binding site" evidence="1">
    <location>
        <position position="303"/>
    </location>
    <ligand>
        <name>D-alanine</name>
        <dbReference type="ChEBI" id="CHEBI:57416"/>
    </ligand>
</feature>
<feature type="binding site" evidence="1">
    <location>
        <position position="385"/>
    </location>
    <ligand>
        <name>ATP</name>
        <dbReference type="ChEBI" id="CHEBI:30616"/>
    </ligand>
</feature>
<feature type="binding site" evidence="1">
    <location>
        <begin position="397"/>
        <end position="400"/>
    </location>
    <ligand>
        <name>ATP</name>
        <dbReference type="ChEBI" id="CHEBI:30616"/>
    </ligand>
</feature>
<feature type="binding site" evidence="1">
    <location>
        <position position="499"/>
    </location>
    <ligand>
        <name>ATP</name>
        <dbReference type="ChEBI" id="CHEBI:30616"/>
    </ligand>
</feature>
<feature type="binding site" evidence="1">
    <location>
        <position position="499"/>
    </location>
    <ligand>
        <name>D-alanine</name>
        <dbReference type="ChEBI" id="CHEBI:57416"/>
    </ligand>
</feature>
<accession>Q8P0J9</accession>
<sequence>MIKDMIDSIEQFAQTQADFPVYDCLGERRTYGQLKRDSDSIAAFIDSLALLAKSPVLVFGAQTYDMLATFVALTKSGHAYIPVDVHSAPERILAIIEIAKPSLIIAIEEFPLTIEGISLVSLSEIESAKLAEMPYERTHSVKGDDNYYIIFTSGTTGQPKGVQISHDNLLSFTNWMIEDAAFDVPKQPQMLAQPPYSFDLSVMYWAPTLALGGTLFALPKELVADFKQLFTTIAQLPVGIWTSTPSFADMAMLSDDFCQAKMPALTHFYFDGEELTVSTARKLFERFPSAKIINAYGPTEATVALSAIEITREMVDNYTRLPIGYPKPDSPTYIIDEDGKELASGEQGEIIVTGPAVSKGYLNNPEKTAEAFFTFKGQPAYHTGDIGSLTEDNILLYGGRLDFQIKYAGYRIELEDVSQQLNQSPMVASAVAVPRYNKEHKVQNLLAYIVVKDGVKERFDRELELTKAIKASVKDHMMSYMMPSKFLYRDSLPLTPNGKIDIKTLINEVNNR</sequence>
<name>DLTA_STRP8</name>